<organism>
    <name type="scientific">Dehalococcoides mccartyi (strain ATCC BAA-2266 / KCTC 15142 / 195)</name>
    <name type="common">Dehalococcoides ethenogenes (strain 195)</name>
    <dbReference type="NCBI Taxonomy" id="243164"/>
    <lineage>
        <taxon>Bacteria</taxon>
        <taxon>Bacillati</taxon>
        <taxon>Chloroflexota</taxon>
        <taxon>Dehalococcoidia</taxon>
        <taxon>Dehalococcoidales</taxon>
        <taxon>Dehalococcoidaceae</taxon>
        <taxon>Dehalococcoides</taxon>
    </lineage>
</organism>
<protein>
    <recommendedName>
        <fullName evidence="1">tRNA-specific 2-thiouridylase MnmA</fullName>
        <ecNumber evidence="1">2.8.1.13</ecNumber>
    </recommendedName>
</protein>
<reference key="1">
    <citation type="journal article" date="2005" name="Science">
        <title>Genome sequence of the PCE-dechlorinating bacterium Dehalococcoides ethenogenes.</title>
        <authorList>
            <person name="Seshadri R."/>
            <person name="Adrian L."/>
            <person name="Fouts D.E."/>
            <person name="Eisen J.A."/>
            <person name="Phillippy A.M."/>
            <person name="Methe B.A."/>
            <person name="Ward N.L."/>
            <person name="Nelson W.C."/>
            <person name="DeBoy R.T."/>
            <person name="Khouri H.M."/>
            <person name="Kolonay J.F."/>
            <person name="Dodson R.J."/>
            <person name="Daugherty S.C."/>
            <person name="Brinkac L.M."/>
            <person name="Sullivan S.A."/>
            <person name="Madupu R."/>
            <person name="Nelson K.E."/>
            <person name="Kang K.H."/>
            <person name="Impraim M."/>
            <person name="Tran K."/>
            <person name="Robinson J.M."/>
            <person name="Forberger H.A."/>
            <person name="Fraser C.M."/>
            <person name="Zinder S.H."/>
            <person name="Heidelberg J.F."/>
        </authorList>
    </citation>
    <scope>NUCLEOTIDE SEQUENCE [LARGE SCALE GENOMIC DNA]</scope>
    <source>
        <strain>ATCC BAA-2266 / KCTC 15142 / 195</strain>
    </source>
</reference>
<name>MNMA_DEHM1</name>
<sequence length="357" mass="39266">MNDTSELIMVAMSGGVDSSVAAMLLLEQGYDVAGVSLQLKSNNEPYGNGYNLKLINRAREVAAALGIPHYVVDLSDIFSQRVIADFCQQYSQGRTPNPCIRCNYYVKIGALLEKIPDFNAGYLATGHYARVLSDENGTHLLKGADEKKDQSYFLYTLPPESLSRLIFPLGKRYKKDIIRLADKMKLPVSQKESQDVCFIPDGDYKSFLATRMGFTPGKILDKTGKILGEHQGLPLYTIGQRQGLGLASNEKLFVSDMNPEANTIMVASHDQLYTSRILLSNFIWRESRIPLDTPGMIVKVRYKAAPAEVKKISQTGDFYLLELASPVWAATPGQAAVIYLGDMVLGGGIIEHGGDVA</sequence>
<gene>
    <name evidence="1" type="primary">mnmA</name>
    <name type="ordered locus">DET0779</name>
</gene>
<proteinExistence type="inferred from homology"/>
<comment type="function">
    <text evidence="1">Catalyzes the 2-thiolation of uridine at the wobble position (U34) of tRNA, leading to the formation of s(2)U34.</text>
</comment>
<comment type="catalytic activity">
    <reaction evidence="1">
        <text>S-sulfanyl-L-cysteinyl-[protein] + uridine(34) in tRNA + AH2 + ATP = 2-thiouridine(34) in tRNA + L-cysteinyl-[protein] + A + AMP + diphosphate + H(+)</text>
        <dbReference type="Rhea" id="RHEA:47032"/>
        <dbReference type="Rhea" id="RHEA-COMP:10131"/>
        <dbReference type="Rhea" id="RHEA-COMP:11726"/>
        <dbReference type="Rhea" id="RHEA-COMP:11727"/>
        <dbReference type="Rhea" id="RHEA-COMP:11728"/>
        <dbReference type="ChEBI" id="CHEBI:13193"/>
        <dbReference type="ChEBI" id="CHEBI:15378"/>
        <dbReference type="ChEBI" id="CHEBI:17499"/>
        <dbReference type="ChEBI" id="CHEBI:29950"/>
        <dbReference type="ChEBI" id="CHEBI:30616"/>
        <dbReference type="ChEBI" id="CHEBI:33019"/>
        <dbReference type="ChEBI" id="CHEBI:61963"/>
        <dbReference type="ChEBI" id="CHEBI:65315"/>
        <dbReference type="ChEBI" id="CHEBI:87170"/>
        <dbReference type="ChEBI" id="CHEBI:456215"/>
        <dbReference type="EC" id="2.8.1.13"/>
    </reaction>
</comment>
<comment type="subcellular location">
    <subcellularLocation>
        <location evidence="1">Cytoplasm</location>
    </subcellularLocation>
</comment>
<comment type="similarity">
    <text evidence="1">Belongs to the MnmA/TRMU family.</text>
</comment>
<keyword id="KW-0067">ATP-binding</keyword>
<keyword id="KW-0963">Cytoplasm</keyword>
<keyword id="KW-1015">Disulfide bond</keyword>
<keyword id="KW-0547">Nucleotide-binding</keyword>
<keyword id="KW-0694">RNA-binding</keyword>
<keyword id="KW-0808">Transferase</keyword>
<keyword id="KW-0819">tRNA processing</keyword>
<keyword id="KW-0820">tRNA-binding</keyword>
<dbReference type="EC" id="2.8.1.13" evidence="1"/>
<dbReference type="EMBL" id="CP000027">
    <property type="protein sequence ID" value="AAW39930.1"/>
    <property type="molecule type" value="Genomic_DNA"/>
</dbReference>
<dbReference type="RefSeq" id="WP_010936512.1">
    <property type="nucleotide sequence ID" value="NC_002936.3"/>
</dbReference>
<dbReference type="SMR" id="Q3Z8D8"/>
<dbReference type="FunCoup" id="Q3Z8D8">
    <property type="interactions" value="326"/>
</dbReference>
<dbReference type="STRING" id="243164.DET0779"/>
<dbReference type="GeneID" id="3229892"/>
<dbReference type="KEGG" id="det:DET0779"/>
<dbReference type="PATRIC" id="fig|243164.10.peg.743"/>
<dbReference type="eggNOG" id="COG0482">
    <property type="taxonomic scope" value="Bacteria"/>
</dbReference>
<dbReference type="HOGENOM" id="CLU_035188_1_0_0"/>
<dbReference type="InParanoid" id="Q3Z8D8"/>
<dbReference type="Proteomes" id="UP000008289">
    <property type="component" value="Chromosome"/>
</dbReference>
<dbReference type="GO" id="GO:0005737">
    <property type="term" value="C:cytoplasm"/>
    <property type="evidence" value="ECO:0007669"/>
    <property type="project" value="UniProtKB-SubCell"/>
</dbReference>
<dbReference type="GO" id="GO:0005524">
    <property type="term" value="F:ATP binding"/>
    <property type="evidence" value="ECO:0007669"/>
    <property type="project" value="UniProtKB-KW"/>
</dbReference>
<dbReference type="GO" id="GO:0000049">
    <property type="term" value="F:tRNA binding"/>
    <property type="evidence" value="ECO:0007669"/>
    <property type="project" value="UniProtKB-KW"/>
</dbReference>
<dbReference type="GO" id="GO:0103016">
    <property type="term" value="F:tRNA-uridine 2-sulfurtransferase activity"/>
    <property type="evidence" value="ECO:0007669"/>
    <property type="project" value="UniProtKB-EC"/>
</dbReference>
<dbReference type="GO" id="GO:0002143">
    <property type="term" value="P:tRNA wobble position uridine thiolation"/>
    <property type="evidence" value="ECO:0007669"/>
    <property type="project" value="TreeGrafter"/>
</dbReference>
<dbReference type="CDD" id="cd01998">
    <property type="entry name" value="MnmA_TRMU-like"/>
    <property type="match status" value="1"/>
</dbReference>
<dbReference type="FunFam" id="2.30.30.280:FF:000001">
    <property type="entry name" value="tRNA-specific 2-thiouridylase MnmA"/>
    <property type="match status" value="1"/>
</dbReference>
<dbReference type="Gene3D" id="2.30.30.280">
    <property type="entry name" value="Adenine nucleotide alpha hydrolases-like domains"/>
    <property type="match status" value="1"/>
</dbReference>
<dbReference type="Gene3D" id="3.40.50.620">
    <property type="entry name" value="HUPs"/>
    <property type="match status" value="1"/>
</dbReference>
<dbReference type="Gene3D" id="2.40.30.10">
    <property type="entry name" value="Translation factors"/>
    <property type="match status" value="1"/>
</dbReference>
<dbReference type="HAMAP" id="MF_00144">
    <property type="entry name" value="tRNA_thiouridyl_MnmA"/>
    <property type="match status" value="1"/>
</dbReference>
<dbReference type="InterPro" id="IPR004506">
    <property type="entry name" value="MnmA-like"/>
</dbReference>
<dbReference type="InterPro" id="IPR046885">
    <property type="entry name" value="MnmA-like_C"/>
</dbReference>
<dbReference type="InterPro" id="IPR046884">
    <property type="entry name" value="MnmA-like_central"/>
</dbReference>
<dbReference type="InterPro" id="IPR023382">
    <property type="entry name" value="MnmA-like_central_sf"/>
</dbReference>
<dbReference type="InterPro" id="IPR014729">
    <property type="entry name" value="Rossmann-like_a/b/a_fold"/>
</dbReference>
<dbReference type="NCBIfam" id="NF001138">
    <property type="entry name" value="PRK00143.1"/>
    <property type="match status" value="1"/>
</dbReference>
<dbReference type="NCBIfam" id="TIGR00420">
    <property type="entry name" value="trmU"/>
    <property type="match status" value="1"/>
</dbReference>
<dbReference type="PANTHER" id="PTHR11933:SF5">
    <property type="entry name" value="MITOCHONDRIAL TRNA-SPECIFIC 2-THIOURIDYLASE 1"/>
    <property type="match status" value="1"/>
</dbReference>
<dbReference type="PANTHER" id="PTHR11933">
    <property type="entry name" value="TRNA 5-METHYLAMINOMETHYL-2-THIOURIDYLATE -METHYLTRANSFERASE"/>
    <property type="match status" value="1"/>
</dbReference>
<dbReference type="Pfam" id="PF03054">
    <property type="entry name" value="tRNA_Me_trans"/>
    <property type="match status" value="1"/>
</dbReference>
<dbReference type="Pfam" id="PF20258">
    <property type="entry name" value="tRNA_Me_trans_C"/>
    <property type="match status" value="1"/>
</dbReference>
<dbReference type="Pfam" id="PF20259">
    <property type="entry name" value="tRNA_Me_trans_M"/>
    <property type="match status" value="1"/>
</dbReference>
<dbReference type="SUPFAM" id="SSF52402">
    <property type="entry name" value="Adenine nucleotide alpha hydrolases-like"/>
    <property type="match status" value="1"/>
</dbReference>
<evidence type="ECO:0000255" key="1">
    <source>
        <dbReference type="HAMAP-Rule" id="MF_00144"/>
    </source>
</evidence>
<feature type="chain" id="PRO_0000349606" description="tRNA-specific 2-thiouridylase MnmA">
    <location>
        <begin position="1"/>
        <end position="357"/>
    </location>
</feature>
<feature type="region of interest" description="Interaction with tRNA" evidence="1">
    <location>
        <begin position="148"/>
        <end position="150"/>
    </location>
</feature>
<feature type="region of interest" description="Interaction with tRNA" evidence="1">
    <location>
        <begin position="301"/>
        <end position="302"/>
    </location>
</feature>
<feature type="active site" description="Nucleophile" evidence="1">
    <location>
        <position position="102"/>
    </location>
</feature>
<feature type="active site" description="Cysteine persulfide intermediate" evidence="1">
    <location>
        <position position="197"/>
    </location>
</feature>
<feature type="binding site" evidence="1">
    <location>
        <begin position="11"/>
        <end position="18"/>
    </location>
    <ligand>
        <name>ATP</name>
        <dbReference type="ChEBI" id="CHEBI:30616"/>
    </ligand>
</feature>
<feature type="binding site" evidence="1">
    <location>
        <position position="37"/>
    </location>
    <ligand>
        <name>ATP</name>
        <dbReference type="ChEBI" id="CHEBI:30616"/>
    </ligand>
</feature>
<feature type="binding site" evidence="1">
    <location>
        <position position="126"/>
    </location>
    <ligand>
        <name>ATP</name>
        <dbReference type="ChEBI" id="CHEBI:30616"/>
    </ligand>
</feature>
<feature type="site" description="Interaction with tRNA" evidence="1">
    <location>
        <position position="127"/>
    </location>
</feature>
<feature type="site" description="Interaction with tRNA" evidence="1">
    <location>
        <position position="334"/>
    </location>
</feature>
<feature type="disulfide bond" description="Alternate" evidence="1">
    <location>
        <begin position="102"/>
        <end position="197"/>
    </location>
</feature>
<accession>Q3Z8D8</accession>